<evidence type="ECO:0000250" key="1"/>
<evidence type="ECO:0000255" key="2"/>
<evidence type="ECO:0000305" key="3"/>
<feature type="chain" id="PRO_0000087532" description="Glucose N-acetyltransferase 1">
    <location>
        <begin position="1"/>
        <end position="462"/>
    </location>
</feature>
<feature type="topological domain" description="Cytoplasmic" evidence="2">
    <location>
        <begin position="1"/>
        <end position="18"/>
    </location>
</feature>
<feature type="transmembrane region" description="Helical; Signal-anchor for type II membrane protein" evidence="2">
    <location>
        <begin position="19"/>
        <end position="35"/>
    </location>
</feature>
<feature type="topological domain" description="Lumenal" evidence="2">
    <location>
        <begin position="36"/>
        <end position="462"/>
    </location>
</feature>
<feature type="short sequence motif" description="DXD">
    <location>
        <begin position="171"/>
        <end position="173"/>
    </location>
</feature>
<protein>
    <recommendedName>
        <fullName>Glucose N-acetyltransferase 1</fullName>
        <ecNumber>2.4.1.-</ecNumber>
    </recommendedName>
    <alternativeName>
        <fullName>N-acetylglucosaminyltransferase</fullName>
    </alternativeName>
</protein>
<keyword id="KW-0333">Golgi apparatus</keyword>
<keyword id="KW-0472">Membrane</keyword>
<keyword id="KW-1185">Reference proteome</keyword>
<keyword id="KW-0735">Signal-anchor</keyword>
<keyword id="KW-0808">Transferase</keyword>
<keyword id="KW-0812">Transmembrane</keyword>
<keyword id="KW-1133">Transmembrane helix</keyword>
<keyword id="KW-0926">Vacuole</keyword>
<reference key="1">
    <citation type="journal article" date="2004" name="Proc. Natl. Acad. Sci. U.S.A.">
        <title>The diploid genome sequence of Candida albicans.</title>
        <authorList>
            <person name="Jones T."/>
            <person name="Federspiel N.A."/>
            <person name="Chibana H."/>
            <person name="Dungan J."/>
            <person name="Kalman S."/>
            <person name="Magee B.B."/>
            <person name="Newport G."/>
            <person name="Thorstenson Y.R."/>
            <person name="Agabian N."/>
            <person name="Magee P.T."/>
            <person name="Davis R.W."/>
            <person name="Scherer S."/>
        </authorList>
    </citation>
    <scope>NUCLEOTIDE SEQUENCE [LARGE SCALE GENOMIC DNA]</scope>
    <source>
        <strain>SC5314 / ATCC MYA-2876</strain>
    </source>
</reference>
<reference key="2">
    <citation type="journal article" date="2007" name="Genome Biol.">
        <title>Assembly of the Candida albicans genome into sixteen supercontigs aligned on the eight chromosomes.</title>
        <authorList>
            <person name="van het Hoog M."/>
            <person name="Rast T.J."/>
            <person name="Martchenko M."/>
            <person name="Grindle S."/>
            <person name="Dignard D."/>
            <person name="Hogues H."/>
            <person name="Cuomo C."/>
            <person name="Berriman M."/>
            <person name="Scherer S."/>
            <person name="Magee B.B."/>
            <person name="Whiteway M."/>
            <person name="Chibana H."/>
            <person name="Nantel A."/>
            <person name="Magee P.T."/>
        </authorList>
    </citation>
    <scope>GENOME REANNOTATION</scope>
    <source>
        <strain>SC5314 / ATCC MYA-2876</strain>
    </source>
</reference>
<reference key="3">
    <citation type="journal article" date="2013" name="Genome Biol.">
        <title>Assembly of a phased diploid Candida albicans genome facilitates allele-specific measurements and provides a simple model for repeat and indel structure.</title>
        <authorList>
            <person name="Muzzey D."/>
            <person name="Schwartz K."/>
            <person name="Weissman J.S."/>
            <person name="Sherlock G."/>
        </authorList>
    </citation>
    <scope>NUCLEOTIDE SEQUENCE [LARGE SCALE GENOMIC DNA]</scope>
    <scope>GENOME REANNOTATION</scope>
    <source>
        <strain>SC5314 / ATCC MYA-2876</strain>
    </source>
</reference>
<comment type="function">
    <text evidence="1">N-acetylglucosaminyltransferase involved in the Golgi-specific modification of N-linked glycans.</text>
</comment>
<comment type="subcellular location">
    <subcellularLocation>
        <location evidence="1">Golgi apparatus membrane</location>
        <topology evidence="1">Single-pass type II membrane protein</topology>
    </subcellularLocation>
    <subcellularLocation>
        <location evidence="1">Vacuole membrane</location>
        <topology evidence="1">Single-pass type II membrane protein</topology>
    </subcellularLocation>
</comment>
<comment type="similarity">
    <text evidence="3">Belongs to the GNT1 family.</text>
</comment>
<dbReference type="EC" id="2.4.1.-"/>
<dbReference type="EMBL" id="CP017624">
    <property type="protein sequence ID" value="AOW27523.1"/>
    <property type="molecule type" value="Genomic_DNA"/>
</dbReference>
<dbReference type="RefSeq" id="XP_714895.1">
    <property type="nucleotide sequence ID" value="XM_709802.1"/>
</dbReference>
<dbReference type="FunCoup" id="Q59ZI3">
    <property type="interactions" value="21"/>
</dbReference>
<dbReference type="STRING" id="237561.Q59ZI3"/>
<dbReference type="EnsemblFungi" id="C2_05050C_A-T">
    <property type="protein sequence ID" value="C2_05050C_A-T-p1"/>
    <property type="gene ID" value="C2_05050C_A"/>
</dbReference>
<dbReference type="GeneID" id="3643450"/>
<dbReference type="KEGG" id="cal:CAALFM_C205050CA"/>
<dbReference type="CGD" id="CAL0000177663">
    <property type="gene designation" value="orf19.11020"/>
</dbReference>
<dbReference type="VEuPathDB" id="FungiDB:C2_05050C_A"/>
<dbReference type="eggNOG" id="KOG1950">
    <property type="taxonomic scope" value="Eukaryota"/>
</dbReference>
<dbReference type="HOGENOM" id="CLU_034860_1_2_1"/>
<dbReference type="InParanoid" id="Q59ZI3"/>
<dbReference type="OMA" id="ILPHRVY"/>
<dbReference type="OrthoDB" id="2014201at2759"/>
<dbReference type="PRO" id="PR:Q59ZI3"/>
<dbReference type="Proteomes" id="UP000000559">
    <property type="component" value="Chromosome 2"/>
</dbReference>
<dbReference type="GO" id="GO:0000139">
    <property type="term" value="C:Golgi membrane"/>
    <property type="evidence" value="ECO:0007669"/>
    <property type="project" value="UniProtKB-SubCell"/>
</dbReference>
<dbReference type="GO" id="GO:0005774">
    <property type="term" value="C:vacuolar membrane"/>
    <property type="evidence" value="ECO:0007669"/>
    <property type="project" value="UniProtKB-SubCell"/>
</dbReference>
<dbReference type="GO" id="GO:0016757">
    <property type="term" value="F:glycosyltransferase activity"/>
    <property type="evidence" value="ECO:0000318"/>
    <property type="project" value="GO_Central"/>
</dbReference>
<dbReference type="CDD" id="cd06914">
    <property type="entry name" value="GT8_GNT1"/>
    <property type="match status" value="1"/>
</dbReference>
<dbReference type="Gene3D" id="3.90.550.10">
    <property type="entry name" value="Spore Coat Polysaccharide Biosynthesis Protein SpsA, Chain A"/>
    <property type="match status" value="1"/>
</dbReference>
<dbReference type="InterPro" id="IPR050587">
    <property type="entry name" value="GNT1/Glycosyltrans_8"/>
</dbReference>
<dbReference type="InterPro" id="IPR029044">
    <property type="entry name" value="Nucleotide-diphossugar_trans"/>
</dbReference>
<dbReference type="PANTHER" id="PTHR11183">
    <property type="entry name" value="GLYCOGENIN SUBFAMILY MEMBER"/>
    <property type="match status" value="1"/>
</dbReference>
<dbReference type="SUPFAM" id="SSF53448">
    <property type="entry name" value="Nucleotide-diphospho-sugar transferases"/>
    <property type="match status" value="1"/>
</dbReference>
<organism>
    <name type="scientific">Candida albicans (strain SC5314 / ATCC MYA-2876)</name>
    <name type="common">Yeast</name>
    <dbReference type="NCBI Taxonomy" id="237561"/>
    <lineage>
        <taxon>Eukaryota</taxon>
        <taxon>Fungi</taxon>
        <taxon>Dikarya</taxon>
        <taxon>Ascomycota</taxon>
        <taxon>Saccharomycotina</taxon>
        <taxon>Pichiomycetes</taxon>
        <taxon>Debaryomycetaceae</taxon>
        <taxon>Candida/Lodderomyces clade</taxon>
        <taxon>Candida</taxon>
    </lineage>
</organism>
<proteinExistence type="inferred from homology"/>
<sequence length="462" mass="55312">MTSKSSSWKALLKNWEFKVAAFIGIYFLISHVVLETTDVVNEKGLKSHLKVLPEEVIDYYGKQPFSNVDKYAYMQYATNYDYLNLAIINFIHLRKANTKIPNLVIIYDEVLHYYASDKWSELYQVANQYKITLKAAPLIKASYQDDSNWAASFTKFHIFNQVEYDRIVFFDSDSMLVDIPNEIDFDNMESRFNHIDELFKIPQELSFASPQAYWLNNVVEGKSPRPRKNVEIPNKKRYSLRMKKLVNDLSIYQDFNLLPSLIYENHYFDNANHFFANHIMVITPSKNTFQELMRYIHNPWWWSITNRGSLRKPNDYDMEILNKYLNNELQRKRINVGILPHRVYGVLTGEFGEEWHERFVVEPQYLPFINKKSNKGWSPLEFFKKIKVVHFSDSPIPKPWEEENNEEHYNIKKIYCDKGDMEKFHKDYPVYKPRLTDDCDSVSIWNWFREQFYKERSGYWFA</sequence>
<gene>
    <name type="primary">GNT1</name>
    <name type="ordered locus">CAALFM_C205050CA</name>
    <name type="ORF">CaO19.11020</name>
    <name type="ORF">CaO19.3536</name>
</gene>
<name>GNT1_CANAL</name>
<accession>Q59ZI3</accession>
<accession>A0A1D8PHA6</accession>